<keyword id="KW-0007">Acetylation</keyword>
<keyword id="KW-0025">Alternative splicing</keyword>
<keyword id="KW-0965">Cell junction</keyword>
<keyword id="KW-0175">Coiled coil</keyword>
<keyword id="KW-0903">Direct protein sequencing</keyword>
<keyword id="KW-0597">Phosphoprotein</keyword>
<keyword id="KW-1267">Proteomics identification</keyword>
<keyword id="KW-1185">Reference proteome</keyword>
<keyword id="KW-0796">Tight junction</keyword>
<evidence type="ECO:0000250" key="1">
    <source>
        <dbReference type="UniProtKB" id="P59242"/>
    </source>
</evidence>
<evidence type="ECO:0000255" key="2"/>
<evidence type="ECO:0000256" key="3">
    <source>
        <dbReference type="SAM" id="MobiDB-lite"/>
    </source>
</evidence>
<evidence type="ECO:0000269" key="4">
    <source>
    </source>
</evidence>
<evidence type="ECO:0000269" key="5">
    <source>
    </source>
</evidence>
<evidence type="ECO:0000303" key="6">
    <source>
    </source>
</evidence>
<evidence type="ECO:0000303" key="7">
    <source>
    </source>
</evidence>
<evidence type="ECO:0000305" key="8"/>
<evidence type="ECO:0000312" key="9">
    <source>
        <dbReference type="HGNC" id="HGNC:17429"/>
    </source>
</evidence>
<evidence type="ECO:0007744" key="10">
    <source>
    </source>
</evidence>
<evidence type="ECO:0007744" key="11">
    <source>
    </source>
</evidence>
<evidence type="ECO:0007744" key="12">
    <source>
    </source>
</evidence>
<evidence type="ECO:0007744" key="13">
    <source>
    </source>
</evidence>
<evidence type="ECO:0007744" key="14">
    <source>
    </source>
</evidence>
<evidence type="ECO:0007744" key="15">
    <source>
    </source>
</evidence>
<evidence type="ECO:0007744" key="16">
    <source>
    </source>
</evidence>
<comment type="function">
    <text>Probably plays a role in the formation and regulation of the tight junction (TJ) paracellular permeability barrier.</text>
</comment>
<comment type="subunit">
    <text evidence="4 5 6">Homodimer (PubMed:11042084). Interacts with TJP1/ZO1 (PubMed:12023291). Interacts with SPEF1 (PubMed:31473225).</text>
</comment>
<comment type="interaction">
    <interactant intactId="EBI-79537">
        <id>Q9P2M7</id>
    </interactant>
    <interactant intactId="EBI-476295">
        <id>P31947</id>
        <label>SFN</label>
    </interactant>
    <organismsDiffer>false</organismsDiffer>
    <experiments>4</experiments>
</comment>
<comment type="interaction">
    <interactant intactId="EBI-79537">
        <id>Q9P2M7</id>
    </interactant>
    <interactant intactId="EBI-79553">
        <id>Q07157</id>
        <label>TJP1</label>
    </interactant>
    <organismsDiffer>false</organismsDiffer>
    <experiments>2</experiments>
</comment>
<comment type="interaction">
    <interactant intactId="EBI-79537">
        <id>Q9P2M7</id>
    </interactant>
    <interactant intactId="EBI-347088">
        <id>P63104</id>
        <label>YWHAZ</label>
    </interactant>
    <organismsDiffer>false</organismsDiffer>
    <experiments>6</experiments>
</comment>
<comment type="subcellular location">
    <subcellularLocation>
        <location evidence="1">Cell junction</location>
        <location evidence="1">Tight junction</location>
    </subcellularLocation>
    <text evidence="1 4">Localizes to the apical junction complex composed of tight and adherens junctions (By similarity). Colocalizes with SPEF1 at sites of cell-cell contact in intestinal epithelial cells (PubMed:12023291).</text>
</comment>
<comment type="alternative products">
    <event type="alternative splicing"/>
    <isoform>
        <id>Q9P2M7-1</id>
        <name>1</name>
        <sequence type="displayed"/>
    </isoform>
    <isoform>
        <id>Q9P2M7-2</id>
        <name>2</name>
        <sequence type="described" ref="VSP_037039 VSP_037040"/>
    </isoform>
</comment>
<comment type="tissue specificity">
    <text>Localized on the cytoplasmic face of tight junctions of polarized epithelia and some endothelia. Expressed in pancreas, kidney, liver and lung, but not in skeletal muscle, placenta, brain or heart.</text>
</comment>
<comment type="domain">
    <text>Deletion of the TJP1/ZO1 interaction motif (ZIM) decreases but does not abolish colocalization with TJP1/ZO1.</text>
</comment>
<comment type="miscellaneous">
    <molecule>Isoform 2</molecule>
    <text evidence="8">May be due to an intron retention.</text>
</comment>
<comment type="similarity">
    <text evidence="8">Belongs to the cingulin family.</text>
</comment>
<comment type="caution">
    <text evidence="8">It is uncertain whether Met-1 or Met-7 is the initiator.</text>
</comment>
<comment type="sequence caution" evidence="8">
    <conflict type="erroneous initiation">
        <sequence resource="EMBL-CDS" id="AAI46658"/>
    </conflict>
    <text>Truncated N-terminus.</text>
</comment>
<comment type="sequence caution" evidence="8">
    <conflict type="erroneous initiation">
        <sequence resource="EMBL-CDS" id="BAA92557"/>
    </conflict>
    <text>Extended N-terminus.</text>
</comment>
<reference key="1">
    <citation type="journal article" date="2000" name="J. Struct. Biol.">
        <title>Human and Xenopus cingulin share a modular organization of the coiled-coil rod domain: predictions for intra- and intermolecular assembly.</title>
        <authorList>
            <person name="Citi S."/>
            <person name="D'Atri F."/>
            <person name="Parry D.A.D."/>
        </authorList>
    </citation>
    <scope>NUCLEOTIDE SEQUENCE [MRNA] (ISOFORM 1)</scope>
    <scope>SUBUNIT</scope>
    <source>
        <tissue>Neuroepithelium</tissue>
    </source>
</reference>
<reference key="2">
    <citation type="journal article" date="2000" name="DNA Res.">
        <title>Prediction of the coding sequences of unidentified human genes. XVI. The complete sequences of 150 new cDNA clones from brain which code for large proteins in vitro.</title>
        <authorList>
            <person name="Nagase T."/>
            <person name="Kikuno R."/>
            <person name="Ishikawa K."/>
            <person name="Hirosawa M."/>
            <person name="Ohara O."/>
        </authorList>
    </citation>
    <scope>NUCLEOTIDE SEQUENCE [LARGE SCALE MRNA] (ISOFORM 1)</scope>
    <source>
        <tissue>Brain</tissue>
    </source>
</reference>
<reference key="3">
    <citation type="journal article" date="2004" name="Nat. Genet.">
        <title>Complete sequencing and characterization of 21,243 full-length human cDNAs.</title>
        <authorList>
            <person name="Ota T."/>
            <person name="Suzuki Y."/>
            <person name="Nishikawa T."/>
            <person name="Otsuki T."/>
            <person name="Sugiyama T."/>
            <person name="Irie R."/>
            <person name="Wakamatsu A."/>
            <person name="Hayashi K."/>
            <person name="Sato H."/>
            <person name="Nagai K."/>
            <person name="Kimura K."/>
            <person name="Makita H."/>
            <person name="Sekine M."/>
            <person name="Obayashi M."/>
            <person name="Nishi T."/>
            <person name="Shibahara T."/>
            <person name="Tanaka T."/>
            <person name="Ishii S."/>
            <person name="Yamamoto J."/>
            <person name="Saito K."/>
            <person name="Kawai Y."/>
            <person name="Isono Y."/>
            <person name="Nakamura Y."/>
            <person name="Nagahari K."/>
            <person name="Murakami K."/>
            <person name="Yasuda T."/>
            <person name="Iwayanagi T."/>
            <person name="Wagatsuma M."/>
            <person name="Shiratori A."/>
            <person name="Sudo H."/>
            <person name="Hosoiri T."/>
            <person name="Kaku Y."/>
            <person name="Kodaira H."/>
            <person name="Kondo H."/>
            <person name="Sugawara M."/>
            <person name="Takahashi M."/>
            <person name="Kanda K."/>
            <person name="Yokoi T."/>
            <person name="Furuya T."/>
            <person name="Kikkawa E."/>
            <person name="Omura Y."/>
            <person name="Abe K."/>
            <person name="Kamihara K."/>
            <person name="Katsuta N."/>
            <person name="Sato K."/>
            <person name="Tanikawa M."/>
            <person name="Yamazaki M."/>
            <person name="Ninomiya K."/>
            <person name="Ishibashi T."/>
            <person name="Yamashita H."/>
            <person name="Murakawa K."/>
            <person name="Fujimori K."/>
            <person name="Tanai H."/>
            <person name="Kimata M."/>
            <person name="Watanabe M."/>
            <person name="Hiraoka S."/>
            <person name="Chiba Y."/>
            <person name="Ishida S."/>
            <person name="Ono Y."/>
            <person name="Takiguchi S."/>
            <person name="Watanabe S."/>
            <person name="Yosida M."/>
            <person name="Hotuta T."/>
            <person name="Kusano J."/>
            <person name="Kanehori K."/>
            <person name="Takahashi-Fujii A."/>
            <person name="Hara H."/>
            <person name="Tanase T.-O."/>
            <person name="Nomura Y."/>
            <person name="Togiya S."/>
            <person name="Komai F."/>
            <person name="Hara R."/>
            <person name="Takeuchi K."/>
            <person name="Arita M."/>
            <person name="Imose N."/>
            <person name="Musashino K."/>
            <person name="Yuuki H."/>
            <person name="Oshima A."/>
            <person name="Sasaki N."/>
            <person name="Aotsuka S."/>
            <person name="Yoshikawa Y."/>
            <person name="Matsunawa H."/>
            <person name="Ichihara T."/>
            <person name="Shiohata N."/>
            <person name="Sano S."/>
            <person name="Moriya S."/>
            <person name="Momiyama H."/>
            <person name="Satoh N."/>
            <person name="Takami S."/>
            <person name="Terashima Y."/>
            <person name="Suzuki O."/>
            <person name="Nakagawa S."/>
            <person name="Senoh A."/>
            <person name="Mizoguchi H."/>
            <person name="Goto Y."/>
            <person name="Shimizu F."/>
            <person name="Wakebe H."/>
            <person name="Hishigaki H."/>
            <person name="Watanabe T."/>
            <person name="Sugiyama A."/>
            <person name="Takemoto M."/>
            <person name="Kawakami B."/>
            <person name="Yamazaki M."/>
            <person name="Watanabe K."/>
            <person name="Kumagai A."/>
            <person name="Itakura S."/>
            <person name="Fukuzumi Y."/>
            <person name="Fujimori Y."/>
            <person name="Komiyama M."/>
            <person name="Tashiro H."/>
            <person name="Tanigami A."/>
            <person name="Fujiwara T."/>
            <person name="Ono T."/>
            <person name="Yamada K."/>
            <person name="Fujii Y."/>
            <person name="Ozaki K."/>
            <person name="Hirao M."/>
            <person name="Ohmori Y."/>
            <person name="Kawabata A."/>
            <person name="Hikiji T."/>
            <person name="Kobatake N."/>
            <person name="Inagaki H."/>
            <person name="Ikema Y."/>
            <person name="Okamoto S."/>
            <person name="Okitani R."/>
            <person name="Kawakami T."/>
            <person name="Noguchi S."/>
            <person name="Itoh T."/>
            <person name="Shigeta K."/>
            <person name="Senba T."/>
            <person name="Matsumura K."/>
            <person name="Nakajima Y."/>
            <person name="Mizuno T."/>
            <person name="Morinaga M."/>
            <person name="Sasaki M."/>
            <person name="Togashi T."/>
            <person name="Oyama M."/>
            <person name="Hata H."/>
            <person name="Watanabe M."/>
            <person name="Komatsu T."/>
            <person name="Mizushima-Sugano J."/>
            <person name="Satoh T."/>
            <person name="Shirai Y."/>
            <person name="Takahashi Y."/>
            <person name="Nakagawa K."/>
            <person name="Okumura K."/>
            <person name="Nagase T."/>
            <person name="Nomura N."/>
            <person name="Kikuchi H."/>
            <person name="Masuho Y."/>
            <person name="Yamashita R."/>
            <person name="Nakai K."/>
            <person name="Yada T."/>
            <person name="Nakamura Y."/>
            <person name="Ohara O."/>
            <person name="Isogai T."/>
            <person name="Sugano S."/>
        </authorList>
    </citation>
    <scope>NUCLEOTIDE SEQUENCE [LARGE SCALE MRNA] (ISOFORM 1)</scope>
    <source>
        <tissue>Hippocampus</tissue>
    </source>
</reference>
<reference key="4">
    <citation type="journal article" date="2006" name="Nature">
        <title>The DNA sequence and biological annotation of human chromosome 1.</title>
        <authorList>
            <person name="Gregory S.G."/>
            <person name="Barlow K.F."/>
            <person name="McLay K.E."/>
            <person name="Kaul R."/>
            <person name="Swarbreck D."/>
            <person name="Dunham A."/>
            <person name="Scott C.E."/>
            <person name="Howe K.L."/>
            <person name="Woodfine K."/>
            <person name="Spencer C.C.A."/>
            <person name="Jones M.C."/>
            <person name="Gillson C."/>
            <person name="Searle S."/>
            <person name="Zhou Y."/>
            <person name="Kokocinski F."/>
            <person name="McDonald L."/>
            <person name="Evans R."/>
            <person name="Phillips K."/>
            <person name="Atkinson A."/>
            <person name="Cooper R."/>
            <person name="Jones C."/>
            <person name="Hall R.E."/>
            <person name="Andrews T.D."/>
            <person name="Lloyd C."/>
            <person name="Ainscough R."/>
            <person name="Almeida J.P."/>
            <person name="Ambrose K.D."/>
            <person name="Anderson F."/>
            <person name="Andrew R.W."/>
            <person name="Ashwell R.I.S."/>
            <person name="Aubin K."/>
            <person name="Babbage A.K."/>
            <person name="Bagguley C.L."/>
            <person name="Bailey J."/>
            <person name="Beasley H."/>
            <person name="Bethel G."/>
            <person name="Bird C.P."/>
            <person name="Bray-Allen S."/>
            <person name="Brown J.Y."/>
            <person name="Brown A.J."/>
            <person name="Buckley D."/>
            <person name="Burton J."/>
            <person name="Bye J."/>
            <person name="Carder C."/>
            <person name="Chapman J.C."/>
            <person name="Clark S.Y."/>
            <person name="Clarke G."/>
            <person name="Clee C."/>
            <person name="Cobley V."/>
            <person name="Collier R.E."/>
            <person name="Corby N."/>
            <person name="Coville G.J."/>
            <person name="Davies J."/>
            <person name="Deadman R."/>
            <person name="Dunn M."/>
            <person name="Earthrowl M."/>
            <person name="Ellington A.G."/>
            <person name="Errington H."/>
            <person name="Frankish A."/>
            <person name="Frankland J."/>
            <person name="French L."/>
            <person name="Garner P."/>
            <person name="Garnett J."/>
            <person name="Gay L."/>
            <person name="Ghori M.R.J."/>
            <person name="Gibson R."/>
            <person name="Gilby L.M."/>
            <person name="Gillett W."/>
            <person name="Glithero R.J."/>
            <person name="Grafham D.V."/>
            <person name="Griffiths C."/>
            <person name="Griffiths-Jones S."/>
            <person name="Grocock R."/>
            <person name="Hammond S."/>
            <person name="Harrison E.S.I."/>
            <person name="Hart E."/>
            <person name="Haugen E."/>
            <person name="Heath P.D."/>
            <person name="Holmes S."/>
            <person name="Holt K."/>
            <person name="Howden P.J."/>
            <person name="Hunt A.R."/>
            <person name="Hunt S.E."/>
            <person name="Hunter G."/>
            <person name="Isherwood J."/>
            <person name="James R."/>
            <person name="Johnson C."/>
            <person name="Johnson D."/>
            <person name="Joy A."/>
            <person name="Kay M."/>
            <person name="Kershaw J.K."/>
            <person name="Kibukawa M."/>
            <person name="Kimberley A.M."/>
            <person name="King A."/>
            <person name="Knights A.J."/>
            <person name="Lad H."/>
            <person name="Laird G."/>
            <person name="Lawlor S."/>
            <person name="Leongamornlert D.A."/>
            <person name="Lloyd D.M."/>
            <person name="Loveland J."/>
            <person name="Lovell J."/>
            <person name="Lush M.J."/>
            <person name="Lyne R."/>
            <person name="Martin S."/>
            <person name="Mashreghi-Mohammadi M."/>
            <person name="Matthews L."/>
            <person name="Matthews N.S.W."/>
            <person name="McLaren S."/>
            <person name="Milne S."/>
            <person name="Mistry S."/>
            <person name="Moore M.J.F."/>
            <person name="Nickerson T."/>
            <person name="O'Dell C.N."/>
            <person name="Oliver K."/>
            <person name="Palmeiri A."/>
            <person name="Palmer S.A."/>
            <person name="Parker A."/>
            <person name="Patel D."/>
            <person name="Pearce A.V."/>
            <person name="Peck A.I."/>
            <person name="Pelan S."/>
            <person name="Phelps K."/>
            <person name="Phillimore B.J."/>
            <person name="Plumb R."/>
            <person name="Rajan J."/>
            <person name="Raymond C."/>
            <person name="Rouse G."/>
            <person name="Saenphimmachak C."/>
            <person name="Sehra H.K."/>
            <person name="Sheridan E."/>
            <person name="Shownkeen R."/>
            <person name="Sims S."/>
            <person name="Skuce C.D."/>
            <person name="Smith M."/>
            <person name="Steward C."/>
            <person name="Subramanian S."/>
            <person name="Sycamore N."/>
            <person name="Tracey A."/>
            <person name="Tromans A."/>
            <person name="Van Helmond Z."/>
            <person name="Wall M."/>
            <person name="Wallis J.M."/>
            <person name="White S."/>
            <person name="Whitehead S.L."/>
            <person name="Wilkinson J.E."/>
            <person name="Willey D.L."/>
            <person name="Williams H."/>
            <person name="Wilming L."/>
            <person name="Wray P.W."/>
            <person name="Wu Z."/>
            <person name="Coulson A."/>
            <person name="Vaudin M."/>
            <person name="Sulston J.E."/>
            <person name="Durbin R.M."/>
            <person name="Hubbard T."/>
            <person name="Wooster R."/>
            <person name="Dunham I."/>
            <person name="Carter N.P."/>
            <person name="McVean G."/>
            <person name="Ross M.T."/>
            <person name="Harrow J."/>
            <person name="Olson M.V."/>
            <person name="Beck S."/>
            <person name="Rogers J."/>
            <person name="Bentley D.R."/>
        </authorList>
    </citation>
    <scope>NUCLEOTIDE SEQUENCE [LARGE SCALE GENOMIC DNA]</scope>
</reference>
<reference key="5">
    <citation type="submission" date="2005-09" db="EMBL/GenBank/DDBJ databases">
        <authorList>
            <person name="Mural R.J."/>
            <person name="Istrail S."/>
            <person name="Sutton G.G."/>
            <person name="Florea L."/>
            <person name="Halpern A.L."/>
            <person name="Mobarry C.M."/>
            <person name="Lippert R."/>
            <person name="Walenz B."/>
            <person name="Shatkay H."/>
            <person name="Dew I."/>
            <person name="Miller J.R."/>
            <person name="Flanigan M.J."/>
            <person name="Edwards N.J."/>
            <person name="Bolanos R."/>
            <person name="Fasulo D."/>
            <person name="Halldorsson B.V."/>
            <person name="Hannenhalli S."/>
            <person name="Turner R."/>
            <person name="Yooseph S."/>
            <person name="Lu F."/>
            <person name="Nusskern D.R."/>
            <person name="Shue B.C."/>
            <person name="Zheng X.H."/>
            <person name="Zhong F."/>
            <person name="Delcher A.L."/>
            <person name="Huson D.H."/>
            <person name="Kravitz S.A."/>
            <person name="Mouchard L."/>
            <person name="Reinert K."/>
            <person name="Remington K.A."/>
            <person name="Clark A.G."/>
            <person name="Waterman M.S."/>
            <person name="Eichler E.E."/>
            <person name="Adams M.D."/>
            <person name="Hunkapiller M.W."/>
            <person name="Myers E.W."/>
            <person name="Venter J.C."/>
        </authorList>
    </citation>
    <scope>NUCLEOTIDE SEQUENCE [LARGE SCALE GENOMIC DNA]</scope>
</reference>
<reference key="6">
    <citation type="journal article" date="2004" name="Genome Res.">
        <title>The status, quality, and expansion of the NIH full-length cDNA project: the Mammalian Gene Collection (MGC).</title>
        <authorList>
            <consortium name="The MGC Project Team"/>
        </authorList>
    </citation>
    <scope>NUCLEOTIDE SEQUENCE [LARGE SCALE MRNA] (ISOFORMS 1 AND 2)</scope>
</reference>
<reference key="7">
    <citation type="journal article" date="2003" name="Nat. Biotechnol.">
        <title>Exploring proteomes and analyzing protein processing by mass spectrometric identification of sorted N-terminal peptides.</title>
        <authorList>
            <person name="Gevaert K."/>
            <person name="Goethals M."/>
            <person name="Martens L."/>
            <person name="Van Damme J."/>
            <person name="Staes A."/>
            <person name="Thomas G.R."/>
            <person name="Vandekerckhove J."/>
        </authorList>
    </citation>
    <scope>PROTEIN SEQUENCE OF 374-382</scope>
    <source>
        <tissue>Platelet</tissue>
    </source>
</reference>
<reference key="8">
    <citation type="journal article" date="2002" name="J. Biol. Chem.">
        <title>Evidence for a functional interaction between cingulin and ZO-1 in cultured cells.</title>
        <authorList>
            <person name="D'Atri F."/>
            <person name="Nadalutti F."/>
            <person name="Citi S."/>
        </authorList>
    </citation>
    <scope>INTERACTION WITH TJP1</scope>
</reference>
<reference key="9">
    <citation type="journal article" date="2008" name="J. Proteome Res.">
        <title>Combining protein-based IMAC, peptide-based IMAC, and MudPIT for efficient phosphoproteomic analysis.</title>
        <authorList>
            <person name="Cantin G.T."/>
            <person name="Yi W."/>
            <person name="Lu B."/>
            <person name="Park S.K."/>
            <person name="Xu T."/>
            <person name="Lee J.-D."/>
            <person name="Yates J.R. III"/>
        </authorList>
    </citation>
    <scope>IDENTIFICATION BY MASS SPECTROMETRY [LARGE SCALE ANALYSIS]</scope>
    <source>
        <tissue>Cervix carcinoma</tissue>
    </source>
</reference>
<reference key="10">
    <citation type="journal article" date="2008" name="Proc. Natl. Acad. Sci. U.S.A.">
        <title>A quantitative atlas of mitotic phosphorylation.</title>
        <authorList>
            <person name="Dephoure N."/>
            <person name="Zhou C."/>
            <person name="Villen J."/>
            <person name="Beausoleil S.A."/>
            <person name="Bakalarski C.E."/>
            <person name="Elledge S.J."/>
            <person name="Gygi S.P."/>
        </authorList>
    </citation>
    <scope>PHOSPHORYLATION [LARGE SCALE ANALYSIS] AT SER-140 AND SER-1182</scope>
    <scope>IDENTIFICATION BY MASS SPECTROMETRY [LARGE SCALE ANALYSIS]</scope>
    <source>
        <tissue>Cervix carcinoma</tissue>
    </source>
</reference>
<reference key="11">
    <citation type="journal article" date="2009" name="Anal. Chem.">
        <title>Lys-N and trypsin cover complementary parts of the phosphoproteome in a refined SCX-based approach.</title>
        <authorList>
            <person name="Gauci S."/>
            <person name="Helbig A.O."/>
            <person name="Slijper M."/>
            <person name="Krijgsveld J."/>
            <person name="Heck A.J."/>
            <person name="Mohammed S."/>
        </authorList>
    </citation>
    <scope>IDENTIFICATION BY MASS SPECTROMETRY [LARGE SCALE ANALYSIS]</scope>
</reference>
<reference key="12">
    <citation type="journal article" date="2009" name="Sci. Signal.">
        <title>Quantitative phosphoproteomic analysis of T cell receptor signaling reveals system-wide modulation of protein-protein interactions.</title>
        <authorList>
            <person name="Mayya V."/>
            <person name="Lundgren D.H."/>
            <person name="Hwang S.-I."/>
            <person name="Rezaul K."/>
            <person name="Wu L."/>
            <person name="Eng J.K."/>
            <person name="Rodionov V."/>
            <person name="Han D.K."/>
        </authorList>
    </citation>
    <scope>PHOSPHORYLATION [LARGE SCALE ANALYSIS] AT SER-140 AND SER-165</scope>
    <scope>IDENTIFICATION BY MASS SPECTROMETRY [LARGE SCALE ANALYSIS]</scope>
    <source>
        <tissue>Leukemic T-cell</tissue>
    </source>
</reference>
<reference key="13">
    <citation type="journal article" date="2009" name="Science">
        <title>Lysine acetylation targets protein complexes and co-regulates major cellular functions.</title>
        <authorList>
            <person name="Choudhary C."/>
            <person name="Kumar C."/>
            <person name="Gnad F."/>
            <person name="Nielsen M.L."/>
            <person name="Rehman M."/>
            <person name="Walther T.C."/>
            <person name="Olsen J.V."/>
            <person name="Mann M."/>
        </authorList>
    </citation>
    <scope>ACETYLATION [LARGE SCALE ANALYSIS] AT LYS-579</scope>
    <scope>IDENTIFICATION BY MASS SPECTROMETRY [LARGE SCALE ANALYSIS]</scope>
</reference>
<reference key="14">
    <citation type="journal article" date="2010" name="Sci. Signal.">
        <title>Quantitative phosphoproteomics reveals widespread full phosphorylation site occupancy during mitosis.</title>
        <authorList>
            <person name="Olsen J.V."/>
            <person name="Vermeulen M."/>
            <person name="Santamaria A."/>
            <person name="Kumar C."/>
            <person name="Miller M.L."/>
            <person name="Jensen L.J."/>
            <person name="Gnad F."/>
            <person name="Cox J."/>
            <person name="Jensen T.S."/>
            <person name="Nigg E.A."/>
            <person name="Brunak S."/>
            <person name="Mann M."/>
        </authorList>
    </citation>
    <scope>PHOSPHORYLATION [LARGE SCALE ANALYSIS] AT SER-165 AND SER-258</scope>
    <scope>IDENTIFICATION BY MASS SPECTROMETRY [LARGE SCALE ANALYSIS]</scope>
    <source>
        <tissue>Cervix carcinoma</tissue>
    </source>
</reference>
<reference key="15">
    <citation type="journal article" date="2011" name="Sci. Signal.">
        <title>System-wide temporal characterization of the proteome and phosphoproteome of human embryonic stem cell differentiation.</title>
        <authorList>
            <person name="Rigbolt K.T."/>
            <person name="Prokhorova T.A."/>
            <person name="Akimov V."/>
            <person name="Henningsen J."/>
            <person name="Johansen P.T."/>
            <person name="Kratchmarova I."/>
            <person name="Kassem M."/>
            <person name="Mann M."/>
            <person name="Olsen J.V."/>
            <person name="Blagoev B."/>
        </authorList>
    </citation>
    <scope>PHOSPHORYLATION [LARGE SCALE ANALYSIS] AT SER-137; SER-140; SER-155; SER-165; SER-214; SER-217 AND THR-712</scope>
    <scope>IDENTIFICATION BY MASS SPECTROMETRY [LARGE SCALE ANALYSIS]</scope>
</reference>
<reference key="16">
    <citation type="journal article" date="2013" name="J. Proteome Res.">
        <title>Toward a comprehensive characterization of a human cancer cell phosphoproteome.</title>
        <authorList>
            <person name="Zhou H."/>
            <person name="Di Palma S."/>
            <person name="Preisinger C."/>
            <person name="Peng M."/>
            <person name="Polat A.N."/>
            <person name="Heck A.J."/>
            <person name="Mohammed S."/>
        </authorList>
    </citation>
    <scope>PHOSPHORYLATION [LARGE SCALE ANALYSIS] AT SER-155</scope>
    <scope>IDENTIFICATION BY MASS SPECTROMETRY [LARGE SCALE ANALYSIS]</scope>
    <source>
        <tissue>Erythroleukemia</tissue>
    </source>
</reference>
<reference key="17">
    <citation type="journal article" date="2014" name="J. Proteomics">
        <title>An enzyme assisted RP-RPLC approach for in-depth analysis of human liver phosphoproteome.</title>
        <authorList>
            <person name="Bian Y."/>
            <person name="Song C."/>
            <person name="Cheng K."/>
            <person name="Dong M."/>
            <person name="Wang F."/>
            <person name="Huang J."/>
            <person name="Sun D."/>
            <person name="Wang L."/>
            <person name="Ye M."/>
            <person name="Zou H."/>
        </authorList>
    </citation>
    <scope>PHOSPHORYLATION [LARGE SCALE ANALYSIS] AT SER-135; SER-137; SER-140; SER-258; SER-276; SER-1175 AND SER-1176</scope>
    <scope>IDENTIFICATION BY MASS SPECTROMETRY [LARGE SCALE ANALYSIS]</scope>
    <source>
        <tissue>Liver</tissue>
    </source>
</reference>
<reference key="18">
    <citation type="journal article" date="2019" name="Gastroenterology">
        <title>Sperm Flagellar 1 Binds Actin in Intestinal Epithelial Cells and Contributes to Formation of Filopodia and Lamellipodia.</title>
        <authorList>
            <person name="Tapia R."/>
            <person name="Perez-Yepez E.A."/>
            <person name="Carlino M.J."/>
            <person name="Karandikar U.C."/>
            <person name="Kralicek S.E."/>
            <person name="Estes M.K."/>
            <person name="Hecht G.A."/>
        </authorList>
    </citation>
    <scope>INTERACTION WITH SPEF1</scope>
    <scope>SUBCELLULAR LOCATION</scope>
</reference>
<sequence>MEQAPNMAEPRGPVDHGVQIRFITEPVSGAEMGTLRRGGRRPAKDARASTYGVAVRVQGIAGQPFVVLNSGEKGGDSFGVQIKGANDQGASGALSSDLELPENPYSQVKGFPAPSQSSTSDEEPGAYWNGKLLRSHSQASLAGPGPVDPSNRSNSMLELAPKVASPGSTIDTAPLSSVDSLINKFDSQLGGQARGRTGRRTRMLPPEQRKRSKSLDSRLPRDTFEERERQSTNHWTSSTKYDNHVGTSKQPAQSQNLSPLSGFSRSRQTQDWVLQSFEEPRRSAQDPTMLQFKSTPDLLRDQQEAAPPGSVDHMKATIYGILREGSSESETSVRRKVSLVLEKMQPLVMVSSGSTKAVAGQGELTRKVEELQRKLDEEVKKRQKLEPSQVGLERQLEEKTEECSRLQELLERRKGEAQQSNKELQNMKRLLDQGEDLRHGLETQVMELQNKLKHVQGPEPAKEVLLKDLLETRELLEEVLEGKQRVEEQLRLRERELTALKGALKEEVASRDQEVEHVRQQYQRDTEQLRRSMQDATQDHAVLEAERQKMSALVRGLQRELEETSEETGHWQSMFQKNKEDLRATKQELLQLRMEKEEMEEELGEKIEVLQRELEQARASAGDTRQVEVLKKELLRTQEELKELQAERQSQEVAGRHRDRELEKQLAVLRVEADRGRELEEQNLQLQKTLQQLRQDCEEASKAKMVAEAEATVLGQRRAAVETTLRETQEENDEFRRRILGLEQQLKETRGLVDGGEAVEARLRDKLQRLEAEKQQLEEALNASQEEEGSLAAAKRALEARLEEAQRGLARLGQEQQTLNRALEEEGKQREVLRRGKAELEEQKRLLDRTVDRLNKELEKIGEDSKQALQQLQAQLEDYKEKARREVADAQRQAKDWASEAEKTSGGLSRLQDEIQRLRQALQASQAERDTARLDKELLAQRLQGLEQEAENKKRSQDDRARQLKGLEEKVSRLETELDEEKNTVELLTDRVNRGRDQVDQLRTELMQERSARQDLECDKISLERQNKDLKTRLASSEGFQKPSASLSQLESQNQLLQERLQAEEREKTVLQSTNRKLERKVKELSIQIEDERQHVNDQKDQLSLRVKALKRQVDEAEEEIERLDGLRKKAQREVEEQHEVNEQLQARIKSLEKDSWRKASRSAAESALKNEGLSSDEEFDSVYDPSSIASLLTESNLQTSSC</sequence>
<dbReference type="EMBL" id="AF263462">
    <property type="protein sequence ID" value="AAF74498.1"/>
    <property type="molecule type" value="mRNA"/>
</dbReference>
<dbReference type="EMBL" id="AB037740">
    <property type="protein sequence ID" value="BAA92557.1"/>
    <property type="status" value="ALT_INIT"/>
    <property type="molecule type" value="mRNA"/>
</dbReference>
<dbReference type="EMBL" id="AK290007">
    <property type="protein sequence ID" value="BAF82696.1"/>
    <property type="molecule type" value="mRNA"/>
</dbReference>
<dbReference type="EMBL" id="AL365436">
    <property type="status" value="NOT_ANNOTATED_CDS"/>
    <property type="molecule type" value="Genomic_DNA"/>
</dbReference>
<dbReference type="EMBL" id="CH471121">
    <property type="protein sequence ID" value="EAW53434.1"/>
    <property type="molecule type" value="Genomic_DNA"/>
</dbReference>
<dbReference type="EMBL" id="BC146657">
    <property type="protein sequence ID" value="AAI46658.1"/>
    <property type="status" value="ALT_INIT"/>
    <property type="molecule type" value="mRNA"/>
</dbReference>
<dbReference type="EMBL" id="BC152445">
    <property type="protein sequence ID" value="AAI52446.1"/>
    <property type="molecule type" value="mRNA"/>
</dbReference>
<dbReference type="CCDS" id="CCDS999.1">
    <molecule id="Q9P2M7-1"/>
</dbReference>
<dbReference type="RefSeq" id="NP_065821.1">
    <molecule id="Q9P2M7-1"/>
    <property type="nucleotide sequence ID" value="NM_020770.3"/>
</dbReference>
<dbReference type="RefSeq" id="XP_005245422.1">
    <molecule id="Q9P2M7-1"/>
    <property type="nucleotide sequence ID" value="XM_005245365.6"/>
</dbReference>
<dbReference type="RefSeq" id="XP_054193792.1">
    <molecule id="Q9P2M7-1"/>
    <property type="nucleotide sequence ID" value="XM_054337817.1"/>
</dbReference>
<dbReference type="SMR" id="Q9P2M7"/>
<dbReference type="BioGRID" id="121589">
    <property type="interactions" value="159"/>
</dbReference>
<dbReference type="DIP" id="DIP-30947N"/>
<dbReference type="FunCoup" id="Q9P2M7">
    <property type="interactions" value="546"/>
</dbReference>
<dbReference type="IntAct" id="Q9P2M7">
    <property type="interactions" value="55"/>
</dbReference>
<dbReference type="MINT" id="Q9P2M7"/>
<dbReference type="STRING" id="9606.ENSP00000271636"/>
<dbReference type="iPTMnet" id="Q9P2M7"/>
<dbReference type="MetOSite" id="Q9P2M7"/>
<dbReference type="PhosphoSitePlus" id="Q9P2M7"/>
<dbReference type="BioMuta" id="CGN"/>
<dbReference type="DMDM" id="27923755"/>
<dbReference type="jPOST" id="Q9P2M7"/>
<dbReference type="MassIVE" id="Q9P2M7"/>
<dbReference type="PaxDb" id="9606-ENSP00000271636"/>
<dbReference type="PeptideAtlas" id="Q9P2M7"/>
<dbReference type="ProteomicsDB" id="83849">
    <molecule id="Q9P2M7-1"/>
</dbReference>
<dbReference type="ProteomicsDB" id="83850">
    <molecule id="Q9P2M7-2"/>
</dbReference>
<dbReference type="Pumba" id="Q9P2M7"/>
<dbReference type="Antibodypedia" id="34064">
    <property type="antibodies" value="96 antibodies from 23 providers"/>
</dbReference>
<dbReference type="DNASU" id="57530"/>
<dbReference type="Ensembl" id="ENST00000271636.12">
    <molecule id="Q9P2M7-1"/>
    <property type="protein sequence ID" value="ENSP00000271636.7"/>
    <property type="gene ID" value="ENSG00000143375.15"/>
</dbReference>
<dbReference type="GeneID" id="57530"/>
<dbReference type="KEGG" id="hsa:57530"/>
<dbReference type="MANE-Select" id="ENST00000271636.12">
    <property type="protein sequence ID" value="ENSP00000271636.7"/>
    <property type="RefSeq nucleotide sequence ID" value="NM_020770.3"/>
    <property type="RefSeq protein sequence ID" value="NP_065821.1"/>
</dbReference>
<dbReference type="UCSC" id="uc009wmw.4">
    <molecule id="Q9P2M7-1"/>
    <property type="organism name" value="human"/>
</dbReference>
<dbReference type="AGR" id="HGNC:17429"/>
<dbReference type="CTD" id="57530"/>
<dbReference type="DisGeNET" id="57530"/>
<dbReference type="GeneCards" id="CGN"/>
<dbReference type="HGNC" id="HGNC:17429">
    <property type="gene designation" value="CGN"/>
</dbReference>
<dbReference type="HPA" id="ENSG00000143375">
    <property type="expression patterns" value="Tissue enhanced (intestine)"/>
</dbReference>
<dbReference type="MIM" id="609473">
    <property type="type" value="gene"/>
</dbReference>
<dbReference type="neXtProt" id="NX_Q9P2M7"/>
<dbReference type="OpenTargets" id="ENSG00000143375"/>
<dbReference type="PharmGKB" id="PA134938123"/>
<dbReference type="VEuPathDB" id="HostDB:ENSG00000143375"/>
<dbReference type="eggNOG" id="ENOG502R9EI">
    <property type="taxonomic scope" value="Eukaryota"/>
</dbReference>
<dbReference type="GeneTree" id="ENSGT00940000154489"/>
<dbReference type="HOGENOM" id="CLU_002036_0_0_1"/>
<dbReference type="InParanoid" id="Q9P2M7"/>
<dbReference type="OMA" id="HWREMFQ"/>
<dbReference type="OrthoDB" id="6108017at2759"/>
<dbReference type="PAN-GO" id="Q9P2M7">
    <property type="GO annotations" value="3 GO annotations based on evolutionary models"/>
</dbReference>
<dbReference type="PhylomeDB" id="Q9P2M7"/>
<dbReference type="TreeFam" id="TF332247"/>
<dbReference type="PathwayCommons" id="Q9P2M7"/>
<dbReference type="Reactome" id="R-HSA-2173791">
    <property type="pathway name" value="TGF-beta receptor signaling in EMT (epithelial to mesenchymal transition)"/>
</dbReference>
<dbReference type="SignaLink" id="Q9P2M7"/>
<dbReference type="BioGRID-ORCS" id="57530">
    <property type="hits" value="12 hits in 1149 CRISPR screens"/>
</dbReference>
<dbReference type="ChiTaRS" id="CGN">
    <property type="organism name" value="human"/>
</dbReference>
<dbReference type="GeneWiki" id="Cingulin"/>
<dbReference type="GenomeRNAi" id="57530"/>
<dbReference type="Pharos" id="Q9P2M7">
    <property type="development level" value="Tbio"/>
</dbReference>
<dbReference type="PRO" id="PR:Q9P2M7"/>
<dbReference type="Proteomes" id="UP000005640">
    <property type="component" value="Chromosome 1"/>
</dbReference>
<dbReference type="RNAct" id="Q9P2M7">
    <property type="molecule type" value="protein"/>
</dbReference>
<dbReference type="Bgee" id="ENSG00000143375">
    <property type="expression patterns" value="Expressed in pancreatic ductal cell and 148 other cell types or tissues"/>
</dbReference>
<dbReference type="ExpressionAtlas" id="Q9P2M7">
    <property type="expression patterns" value="baseline and differential"/>
</dbReference>
<dbReference type="GO" id="GO:0005923">
    <property type="term" value="C:bicellular tight junction"/>
    <property type="evidence" value="ECO:0000314"/>
    <property type="project" value="MGI"/>
</dbReference>
<dbReference type="GO" id="GO:0030054">
    <property type="term" value="C:cell junction"/>
    <property type="evidence" value="ECO:0000314"/>
    <property type="project" value="HPA"/>
</dbReference>
<dbReference type="GO" id="GO:0016459">
    <property type="term" value="C:myosin complex"/>
    <property type="evidence" value="ECO:0007669"/>
    <property type="project" value="InterPro"/>
</dbReference>
<dbReference type="GO" id="GO:0005886">
    <property type="term" value="C:plasma membrane"/>
    <property type="evidence" value="ECO:0000314"/>
    <property type="project" value="HPA"/>
</dbReference>
<dbReference type="GO" id="GO:0003779">
    <property type="term" value="F:actin binding"/>
    <property type="evidence" value="ECO:0000250"/>
    <property type="project" value="UniProtKB"/>
</dbReference>
<dbReference type="GO" id="GO:0045296">
    <property type="term" value="F:cadherin binding"/>
    <property type="evidence" value="ECO:0007005"/>
    <property type="project" value="BHF-UCL"/>
</dbReference>
<dbReference type="GO" id="GO:0008017">
    <property type="term" value="F:microtubule binding"/>
    <property type="evidence" value="ECO:0000318"/>
    <property type="project" value="GO_Central"/>
</dbReference>
<dbReference type="GO" id="GO:0000226">
    <property type="term" value="P:microtubule cytoskeleton organization"/>
    <property type="evidence" value="ECO:0000318"/>
    <property type="project" value="GO_Central"/>
</dbReference>
<dbReference type="InterPro" id="IPR002928">
    <property type="entry name" value="Myosin_tail"/>
</dbReference>
<dbReference type="PANTHER" id="PTHR46349:SF4">
    <property type="entry name" value="CINGULIN"/>
    <property type="match status" value="1"/>
</dbReference>
<dbReference type="PANTHER" id="PTHR46349">
    <property type="entry name" value="CINGULIN-LIKE PROTEIN 1-RELATED"/>
    <property type="match status" value="1"/>
</dbReference>
<dbReference type="Pfam" id="PF01576">
    <property type="entry name" value="Myosin_tail_1"/>
    <property type="match status" value="1"/>
</dbReference>
<organism>
    <name type="scientific">Homo sapiens</name>
    <name type="common">Human</name>
    <dbReference type="NCBI Taxonomy" id="9606"/>
    <lineage>
        <taxon>Eukaryota</taxon>
        <taxon>Metazoa</taxon>
        <taxon>Chordata</taxon>
        <taxon>Craniata</taxon>
        <taxon>Vertebrata</taxon>
        <taxon>Euteleostomi</taxon>
        <taxon>Mammalia</taxon>
        <taxon>Eutheria</taxon>
        <taxon>Euarchontoglires</taxon>
        <taxon>Primates</taxon>
        <taxon>Haplorrhini</taxon>
        <taxon>Catarrhini</taxon>
        <taxon>Hominidae</taxon>
        <taxon>Homo</taxon>
    </lineage>
</organism>
<proteinExistence type="evidence at protein level"/>
<accession>Q9P2M7</accession>
<accession>A6H8L3</accession>
<accession>A7MD22</accession>
<accession>Q5T386</accession>
<accession>Q9NR25</accession>
<name>CING_HUMAN</name>
<gene>
    <name evidence="9" type="primary">CGN</name>
    <name type="synonym">KIAA1319</name>
</gene>
<feature type="chain" id="PRO_0000089763" description="Cingulin">
    <location>
        <begin position="1"/>
        <end position="1203"/>
    </location>
</feature>
<feature type="region of interest" description="Head">
    <location>
        <begin position="7"/>
        <end position="357"/>
    </location>
</feature>
<feature type="region of interest" description="Disordered" evidence="3">
    <location>
        <begin position="25"/>
        <end position="48"/>
    </location>
</feature>
<feature type="region of interest" description="Interaction with TJP1/ZO1" evidence="4">
    <location>
        <begin position="54"/>
        <end position="67"/>
    </location>
</feature>
<feature type="region of interest" description="Disordered" evidence="3">
    <location>
        <begin position="89"/>
        <end position="127"/>
    </location>
</feature>
<feature type="region of interest" description="Disordered" evidence="3">
    <location>
        <begin position="186"/>
        <end position="266"/>
    </location>
</feature>
<feature type="region of interest" description="Disordered" evidence="3">
    <location>
        <begin position="1034"/>
        <end position="1053"/>
    </location>
</feature>
<feature type="region of interest" description="Disordered" evidence="3">
    <location>
        <begin position="1154"/>
        <end position="1181"/>
    </location>
</feature>
<feature type="region of interest" description="Tail">
    <location>
        <begin position="1161"/>
        <end position="1203"/>
    </location>
</feature>
<feature type="coiled-coil region" evidence="2">
    <location>
        <begin position="358"/>
        <end position="1160"/>
    </location>
</feature>
<feature type="short sequence motif" description="ZIM">
    <location>
        <begin position="48"/>
        <end position="62"/>
    </location>
</feature>
<feature type="compositionally biased region" description="Basic and acidic residues" evidence="3">
    <location>
        <begin position="207"/>
        <end position="231"/>
    </location>
</feature>
<feature type="compositionally biased region" description="Polar residues" evidence="3">
    <location>
        <begin position="232"/>
        <end position="266"/>
    </location>
</feature>
<feature type="compositionally biased region" description="Low complexity" evidence="3">
    <location>
        <begin position="1044"/>
        <end position="1053"/>
    </location>
</feature>
<feature type="modified residue" description="Phosphoserine" evidence="1">
    <location>
        <position position="95"/>
    </location>
</feature>
<feature type="modified residue" description="Phosphoserine" evidence="1">
    <location>
        <position position="96"/>
    </location>
</feature>
<feature type="modified residue" description="Phosphoserine" evidence="16">
    <location>
        <position position="135"/>
    </location>
</feature>
<feature type="modified residue" description="Phosphoserine" evidence="14 16">
    <location>
        <position position="137"/>
    </location>
</feature>
<feature type="modified residue" description="Phosphoserine" evidence="10 12 14 16">
    <location>
        <position position="140"/>
    </location>
</feature>
<feature type="modified residue" description="Phosphoserine" evidence="14 15">
    <location>
        <position position="155"/>
    </location>
</feature>
<feature type="modified residue" description="Phosphoserine" evidence="12 13 14">
    <location>
        <position position="165"/>
    </location>
</feature>
<feature type="modified residue" description="Phosphoserine" evidence="14">
    <location>
        <position position="214"/>
    </location>
</feature>
<feature type="modified residue" description="Phosphoserine" evidence="14">
    <location>
        <position position="217"/>
    </location>
</feature>
<feature type="modified residue" description="Phosphoserine" evidence="13 16">
    <location>
        <position position="258"/>
    </location>
</feature>
<feature type="modified residue" description="Phosphoserine" evidence="16">
    <location>
        <position position="276"/>
    </location>
</feature>
<feature type="modified residue" description="Phosphoserine" evidence="1">
    <location>
        <position position="338"/>
    </location>
</feature>
<feature type="modified residue" description="Phosphoserine" evidence="1">
    <location>
        <position position="351"/>
    </location>
</feature>
<feature type="modified residue" description="N6-acetyllysine" evidence="11">
    <location>
        <position position="579"/>
    </location>
</feature>
<feature type="modified residue" description="Phosphothreonine" evidence="14">
    <location>
        <position position="712"/>
    </location>
</feature>
<feature type="modified residue" description="Phosphoserine" evidence="16">
    <location>
        <position position="1175"/>
    </location>
</feature>
<feature type="modified residue" description="Phosphoserine" evidence="16">
    <location>
        <position position="1176"/>
    </location>
</feature>
<feature type="modified residue" description="Phosphoserine" evidence="10">
    <location>
        <position position="1182"/>
    </location>
</feature>
<feature type="splice variant" id="VSP_037039" description="In isoform 2." evidence="7">
    <original>KMVAEAEATVLGQRRAAVETTLRETQEENDEFRRRILGLEQQLKETRGLVDGGEAVEARLRDKLQRLEAEKQQL</original>
    <variation>RGVGTGLRRWRLRVSGGLRSQRVWKVTCHGYVLTSSWVLGMWFKEARIWQGEDTCICVGVGFSEKRLAGGSCSL</variation>
    <location>
        <begin position="704"/>
        <end position="777"/>
    </location>
</feature>
<feature type="splice variant" id="VSP_037040" description="In isoform 2." evidence="7">
    <location>
        <begin position="778"/>
        <end position="1203"/>
    </location>
</feature>
<feature type="sequence variant" id="VAR_057809" description="In dbSNP:rs12038198.">
    <original>R</original>
    <variation>Q</variation>
    <location>
        <position position="485"/>
    </location>
</feature>
<protein>
    <recommendedName>
        <fullName evidence="8">Cingulin</fullName>
    </recommendedName>
</protein>